<keyword id="KW-1185">Reference proteome</keyword>
<keyword id="KW-0687">Ribonucleoprotein</keyword>
<keyword id="KW-0689">Ribosomal protein</keyword>
<keyword id="KW-0694">RNA-binding</keyword>
<keyword id="KW-0699">rRNA-binding</keyword>
<dbReference type="EMBL" id="AM406670">
    <property type="protein sequence ID" value="CAL93371.1"/>
    <property type="molecule type" value="Genomic_DNA"/>
</dbReference>
<dbReference type="RefSeq" id="WP_011764488.1">
    <property type="nucleotide sequence ID" value="NC_008702.1"/>
</dbReference>
<dbReference type="SMR" id="A1K3G6"/>
<dbReference type="STRING" id="62928.azo0754"/>
<dbReference type="KEGG" id="aoa:dqs_0828"/>
<dbReference type="KEGG" id="azo:azo0754"/>
<dbReference type="eggNOG" id="COG1825">
    <property type="taxonomic scope" value="Bacteria"/>
</dbReference>
<dbReference type="HOGENOM" id="CLU_075939_0_1_4"/>
<dbReference type="OrthoDB" id="9806411at2"/>
<dbReference type="Proteomes" id="UP000002588">
    <property type="component" value="Chromosome"/>
</dbReference>
<dbReference type="GO" id="GO:0022625">
    <property type="term" value="C:cytosolic large ribosomal subunit"/>
    <property type="evidence" value="ECO:0007669"/>
    <property type="project" value="TreeGrafter"/>
</dbReference>
<dbReference type="GO" id="GO:0008097">
    <property type="term" value="F:5S rRNA binding"/>
    <property type="evidence" value="ECO:0007669"/>
    <property type="project" value="InterPro"/>
</dbReference>
<dbReference type="GO" id="GO:0003735">
    <property type="term" value="F:structural constituent of ribosome"/>
    <property type="evidence" value="ECO:0007669"/>
    <property type="project" value="InterPro"/>
</dbReference>
<dbReference type="GO" id="GO:0006412">
    <property type="term" value="P:translation"/>
    <property type="evidence" value="ECO:0007669"/>
    <property type="project" value="UniProtKB-UniRule"/>
</dbReference>
<dbReference type="CDD" id="cd00495">
    <property type="entry name" value="Ribosomal_L25_TL5_CTC"/>
    <property type="match status" value="1"/>
</dbReference>
<dbReference type="Gene3D" id="2.170.120.20">
    <property type="entry name" value="Ribosomal protein L25, beta domain"/>
    <property type="match status" value="1"/>
</dbReference>
<dbReference type="Gene3D" id="2.40.240.10">
    <property type="entry name" value="Ribosomal Protein L25, Chain P"/>
    <property type="match status" value="1"/>
</dbReference>
<dbReference type="HAMAP" id="MF_01336">
    <property type="entry name" value="Ribosomal_bL25"/>
    <property type="match status" value="1"/>
</dbReference>
<dbReference type="HAMAP" id="MF_01334">
    <property type="entry name" value="Ribosomal_bL25_CTC"/>
    <property type="match status" value="1"/>
</dbReference>
<dbReference type="InterPro" id="IPR020056">
    <property type="entry name" value="Rbsml_bL25/Gln-tRNA_synth_N"/>
</dbReference>
<dbReference type="InterPro" id="IPR011035">
    <property type="entry name" value="Ribosomal_bL25/Gln-tRNA_synth"/>
</dbReference>
<dbReference type="InterPro" id="IPR020057">
    <property type="entry name" value="Ribosomal_bL25_b-dom"/>
</dbReference>
<dbReference type="InterPro" id="IPR037121">
    <property type="entry name" value="Ribosomal_bL25_C"/>
</dbReference>
<dbReference type="InterPro" id="IPR001021">
    <property type="entry name" value="Ribosomal_bL25_long"/>
</dbReference>
<dbReference type="InterPro" id="IPR020055">
    <property type="entry name" value="Ribosomal_bL25_short"/>
</dbReference>
<dbReference type="InterPro" id="IPR029751">
    <property type="entry name" value="Ribosomal_L25_dom"/>
</dbReference>
<dbReference type="InterPro" id="IPR020930">
    <property type="entry name" value="Ribosomal_uL5_bac-type"/>
</dbReference>
<dbReference type="NCBIfam" id="TIGR00731">
    <property type="entry name" value="bL25_bact_ctc"/>
    <property type="match status" value="1"/>
</dbReference>
<dbReference type="NCBIfam" id="NF004128">
    <property type="entry name" value="PRK05618.1-2"/>
    <property type="match status" value="1"/>
</dbReference>
<dbReference type="NCBIfam" id="NF004130">
    <property type="entry name" value="PRK05618.1-5"/>
    <property type="match status" value="1"/>
</dbReference>
<dbReference type="NCBIfam" id="NF004612">
    <property type="entry name" value="PRK05943.1"/>
    <property type="match status" value="1"/>
</dbReference>
<dbReference type="PANTHER" id="PTHR33284">
    <property type="entry name" value="RIBOSOMAL PROTEIN L25/GLN-TRNA SYNTHETASE, ANTI-CODON-BINDING DOMAIN-CONTAINING PROTEIN"/>
    <property type="match status" value="1"/>
</dbReference>
<dbReference type="PANTHER" id="PTHR33284:SF1">
    <property type="entry name" value="RIBOSOMAL PROTEIN L25_GLN-TRNA SYNTHETASE, ANTI-CODON-BINDING DOMAIN-CONTAINING PROTEIN"/>
    <property type="match status" value="1"/>
</dbReference>
<dbReference type="Pfam" id="PF01386">
    <property type="entry name" value="Ribosomal_L25p"/>
    <property type="match status" value="1"/>
</dbReference>
<dbReference type="Pfam" id="PF14693">
    <property type="entry name" value="Ribosomal_TL5_C"/>
    <property type="match status" value="1"/>
</dbReference>
<dbReference type="SUPFAM" id="SSF50715">
    <property type="entry name" value="Ribosomal protein L25-like"/>
    <property type="match status" value="1"/>
</dbReference>
<accession>A1K3G6</accession>
<sequence>MTIEFNATKREGQGSSASRRLRRAAQVPGIIYGAGKDAQPITLDHNELYHLLKKEAFHASVLSINVEGAKETVVLRDTQWHAYKQQVLHIDFQRVDASQKLHLKVPLHFVNGDNAPAVKLGGNIIAHVMTELDVQCLPSSLPEFIEVDLAALEAGQSIHVSQLKLPAGVEAVHHGEGDPVVASAQTTRGAAAAEGEGEAA</sequence>
<evidence type="ECO:0000255" key="1">
    <source>
        <dbReference type="HAMAP-Rule" id="MF_01334"/>
    </source>
</evidence>
<evidence type="ECO:0000256" key="2">
    <source>
        <dbReference type="SAM" id="MobiDB-lite"/>
    </source>
</evidence>
<evidence type="ECO:0000305" key="3"/>
<protein>
    <recommendedName>
        <fullName evidence="1">Large ribosomal subunit protein bL25</fullName>
    </recommendedName>
    <alternativeName>
        <fullName evidence="3">50S ribosomal protein L25</fullName>
    </alternativeName>
    <alternativeName>
        <fullName evidence="1">General stress protein CTC</fullName>
    </alternativeName>
</protein>
<comment type="function">
    <text evidence="1">This is one of the proteins that binds to the 5S RNA in the ribosome where it forms part of the central protuberance.</text>
</comment>
<comment type="subunit">
    <text evidence="1">Part of the 50S ribosomal subunit; part of the 5S rRNA/L5/L18/L25 subcomplex. Contacts the 5S rRNA. Binds to the 5S rRNA independently of L5 and L18.</text>
</comment>
<comment type="similarity">
    <text evidence="1">Belongs to the bacterial ribosomal protein bL25 family. CTC subfamily.</text>
</comment>
<feature type="chain" id="PRO_1000052865" description="Large ribosomal subunit protein bL25">
    <location>
        <begin position="1"/>
        <end position="200"/>
    </location>
</feature>
<feature type="region of interest" description="Disordered" evidence="2">
    <location>
        <begin position="1"/>
        <end position="20"/>
    </location>
</feature>
<feature type="region of interest" description="Disordered" evidence="2">
    <location>
        <begin position="179"/>
        <end position="200"/>
    </location>
</feature>
<reference key="1">
    <citation type="journal article" date="2006" name="Nat. Biotechnol.">
        <title>Complete genome of the mutualistic, N2-fixing grass endophyte Azoarcus sp. strain BH72.</title>
        <authorList>
            <person name="Krause A."/>
            <person name="Ramakumar A."/>
            <person name="Bartels D."/>
            <person name="Battistoni F."/>
            <person name="Bekel T."/>
            <person name="Boch J."/>
            <person name="Boehm M."/>
            <person name="Friedrich F."/>
            <person name="Hurek T."/>
            <person name="Krause L."/>
            <person name="Linke B."/>
            <person name="McHardy A.C."/>
            <person name="Sarkar A."/>
            <person name="Schneiker S."/>
            <person name="Syed A.A."/>
            <person name="Thauer R."/>
            <person name="Vorhoelter F.-J."/>
            <person name="Weidner S."/>
            <person name="Puehler A."/>
            <person name="Reinhold-Hurek B."/>
            <person name="Kaiser O."/>
            <person name="Goesmann A."/>
        </authorList>
    </citation>
    <scope>NUCLEOTIDE SEQUENCE [LARGE SCALE GENOMIC DNA]</scope>
    <source>
        <strain>BH72</strain>
    </source>
</reference>
<name>RL25_AZOSB</name>
<organism>
    <name type="scientific">Azoarcus sp. (strain BH72)</name>
    <dbReference type="NCBI Taxonomy" id="418699"/>
    <lineage>
        <taxon>Bacteria</taxon>
        <taxon>Pseudomonadati</taxon>
        <taxon>Pseudomonadota</taxon>
        <taxon>Betaproteobacteria</taxon>
        <taxon>Rhodocyclales</taxon>
        <taxon>Zoogloeaceae</taxon>
        <taxon>Azoarcus</taxon>
    </lineage>
</organism>
<proteinExistence type="inferred from homology"/>
<gene>
    <name evidence="1" type="primary">rplY</name>
    <name evidence="1" type="synonym">ctc</name>
    <name type="ordered locus">azo0754</name>
</gene>